<sequence>MPRKGSVPKRDVLPDPIHNSKLVTKLINKIMLDGKRGTAQRILYSAFNLVEQRSGRDALEVFEEAINNIMPVLEVKARRVGGSNYQVPVEVRPERRTTLGLRWLVNYARLRGEKTMEDRLANEILDAANNTGGAVKKREDTHKMAEANKAFAHYRW</sequence>
<organism>
    <name type="scientific">Staphylococcus aureus (strain bovine RF122 / ET3-1)</name>
    <dbReference type="NCBI Taxonomy" id="273036"/>
    <lineage>
        <taxon>Bacteria</taxon>
        <taxon>Bacillati</taxon>
        <taxon>Bacillota</taxon>
        <taxon>Bacilli</taxon>
        <taxon>Bacillales</taxon>
        <taxon>Staphylococcaceae</taxon>
        <taxon>Staphylococcus</taxon>
    </lineage>
</organism>
<keyword id="KW-0687">Ribonucleoprotein</keyword>
<keyword id="KW-0689">Ribosomal protein</keyword>
<keyword id="KW-0694">RNA-binding</keyword>
<keyword id="KW-0699">rRNA-binding</keyword>
<keyword id="KW-0820">tRNA-binding</keyword>
<proteinExistence type="inferred from homology"/>
<dbReference type="EMBL" id="AJ938182">
    <property type="protein sequence ID" value="CAI80185.1"/>
    <property type="molecule type" value="Genomic_DNA"/>
</dbReference>
<dbReference type="RefSeq" id="WP_001137496.1">
    <property type="nucleotide sequence ID" value="NC_007622.1"/>
</dbReference>
<dbReference type="SMR" id="Q2YSB5"/>
<dbReference type="KEGG" id="sab:SAB0497"/>
<dbReference type="HOGENOM" id="CLU_072226_1_1_9"/>
<dbReference type="GO" id="GO:0015935">
    <property type="term" value="C:small ribosomal subunit"/>
    <property type="evidence" value="ECO:0007669"/>
    <property type="project" value="InterPro"/>
</dbReference>
<dbReference type="GO" id="GO:0019843">
    <property type="term" value="F:rRNA binding"/>
    <property type="evidence" value="ECO:0007669"/>
    <property type="project" value="UniProtKB-UniRule"/>
</dbReference>
<dbReference type="GO" id="GO:0003735">
    <property type="term" value="F:structural constituent of ribosome"/>
    <property type="evidence" value="ECO:0007669"/>
    <property type="project" value="InterPro"/>
</dbReference>
<dbReference type="GO" id="GO:0000049">
    <property type="term" value="F:tRNA binding"/>
    <property type="evidence" value="ECO:0007669"/>
    <property type="project" value="UniProtKB-UniRule"/>
</dbReference>
<dbReference type="GO" id="GO:0006412">
    <property type="term" value="P:translation"/>
    <property type="evidence" value="ECO:0007669"/>
    <property type="project" value="UniProtKB-UniRule"/>
</dbReference>
<dbReference type="CDD" id="cd14869">
    <property type="entry name" value="uS7_Bacteria"/>
    <property type="match status" value="1"/>
</dbReference>
<dbReference type="FunFam" id="1.10.455.10:FF:000001">
    <property type="entry name" value="30S ribosomal protein S7"/>
    <property type="match status" value="1"/>
</dbReference>
<dbReference type="Gene3D" id="1.10.455.10">
    <property type="entry name" value="Ribosomal protein S7 domain"/>
    <property type="match status" value="1"/>
</dbReference>
<dbReference type="HAMAP" id="MF_00480_B">
    <property type="entry name" value="Ribosomal_uS7_B"/>
    <property type="match status" value="1"/>
</dbReference>
<dbReference type="InterPro" id="IPR000235">
    <property type="entry name" value="Ribosomal_uS7"/>
</dbReference>
<dbReference type="InterPro" id="IPR005717">
    <property type="entry name" value="Ribosomal_uS7_bac/org-type"/>
</dbReference>
<dbReference type="InterPro" id="IPR020606">
    <property type="entry name" value="Ribosomal_uS7_CS"/>
</dbReference>
<dbReference type="InterPro" id="IPR023798">
    <property type="entry name" value="Ribosomal_uS7_dom"/>
</dbReference>
<dbReference type="InterPro" id="IPR036823">
    <property type="entry name" value="Ribosomal_uS7_dom_sf"/>
</dbReference>
<dbReference type="NCBIfam" id="TIGR01029">
    <property type="entry name" value="rpsG_bact"/>
    <property type="match status" value="1"/>
</dbReference>
<dbReference type="PANTHER" id="PTHR11205">
    <property type="entry name" value="RIBOSOMAL PROTEIN S7"/>
    <property type="match status" value="1"/>
</dbReference>
<dbReference type="Pfam" id="PF00177">
    <property type="entry name" value="Ribosomal_S7"/>
    <property type="match status" value="1"/>
</dbReference>
<dbReference type="PIRSF" id="PIRSF002122">
    <property type="entry name" value="RPS7p_RPS7a_RPS5e_RPS7o"/>
    <property type="match status" value="1"/>
</dbReference>
<dbReference type="SUPFAM" id="SSF47973">
    <property type="entry name" value="Ribosomal protein S7"/>
    <property type="match status" value="1"/>
</dbReference>
<dbReference type="PROSITE" id="PS00052">
    <property type="entry name" value="RIBOSOMAL_S7"/>
    <property type="match status" value="1"/>
</dbReference>
<evidence type="ECO:0000255" key="1">
    <source>
        <dbReference type="HAMAP-Rule" id="MF_00480"/>
    </source>
</evidence>
<evidence type="ECO:0000305" key="2"/>
<accession>Q2YSB5</accession>
<name>RS7_STAAB</name>
<protein>
    <recommendedName>
        <fullName evidence="1">Small ribosomal subunit protein uS7</fullName>
    </recommendedName>
    <alternativeName>
        <fullName evidence="2">30S ribosomal protein S7</fullName>
    </alternativeName>
</protein>
<feature type="chain" id="PRO_0000226529" description="Small ribosomal subunit protein uS7">
    <location>
        <begin position="1"/>
        <end position="156"/>
    </location>
</feature>
<gene>
    <name evidence="1" type="primary">rpsG</name>
    <name type="ordered locus">SAB0497</name>
</gene>
<reference key="1">
    <citation type="journal article" date="2007" name="PLoS ONE">
        <title>Molecular correlates of host specialization in Staphylococcus aureus.</title>
        <authorList>
            <person name="Herron-Olson L."/>
            <person name="Fitzgerald J.R."/>
            <person name="Musser J.M."/>
            <person name="Kapur V."/>
        </authorList>
    </citation>
    <scope>NUCLEOTIDE SEQUENCE [LARGE SCALE GENOMIC DNA]</scope>
    <source>
        <strain>bovine RF122 / ET3-1</strain>
    </source>
</reference>
<comment type="function">
    <text evidence="1">One of the primary rRNA binding proteins, it binds directly to 16S rRNA where it nucleates assembly of the head domain of the 30S subunit. Is located at the subunit interface close to the decoding center, probably blocks exit of the E-site tRNA.</text>
</comment>
<comment type="subunit">
    <text evidence="1">Part of the 30S ribosomal subunit. Contacts proteins S9 and S11.</text>
</comment>
<comment type="similarity">
    <text evidence="1">Belongs to the universal ribosomal protein uS7 family.</text>
</comment>